<protein>
    <recommendedName>
        <fullName evidence="1">DNA-directed RNA polymerase subunit beta'</fullName>
        <shortName evidence="1">RNAP subunit beta'</shortName>
        <ecNumber evidence="1">2.7.7.6</ecNumber>
    </recommendedName>
    <alternativeName>
        <fullName evidence="1">RNA polymerase subunit beta'</fullName>
    </alternativeName>
    <alternativeName>
        <fullName evidence="1">Transcriptase subunit beta'</fullName>
    </alternativeName>
</protein>
<proteinExistence type="inferred from homology"/>
<evidence type="ECO:0000255" key="1">
    <source>
        <dbReference type="HAMAP-Rule" id="MF_01322"/>
    </source>
</evidence>
<reference key="1">
    <citation type="journal article" date="2009" name="Environ. Microbiol.">
        <title>Contribution of mobile genetic elements to Desulfovibrio vulgaris genome plasticity.</title>
        <authorList>
            <person name="Walker C.B."/>
            <person name="Stolyar S."/>
            <person name="Chivian D."/>
            <person name="Pinel N."/>
            <person name="Gabster J.A."/>
            <person name="Dehal P.S."/>
            <person name="He Z."/>
            <person name="Yang Z.K."/>
            <person name="Yen H.C."/>
            <person name="Zhou J."/>
            <person name="Wall J.D."/>
            <person name="Hazen T.C."/>
            <person name="Arkin A.P."/>
            <person name="Stahl D.A."/>
        </authorList>
    </citation>
    <scope>NUCLEOTIDE SEQUENCE [LARGE SCALE GENOMIC DNA]</scope>
    <source>
        <strain>DP4</strain>
    </source>
</reference>
<sequence>MTLDDLFTVRGSAANIANIRNLKAIQITIASPENIREWSYGEVKKPETINYRTFKPERDGLFCAKIFGPVKDYECNCGKYKRMKHRGIVCEKCGVEVIASKVRRERMGHIELAAPVAHIWFLKTLPSKIGTLLDMTMADLEKVLYFDSYIVLDPGSTNLTKMQVISEDQYLQVIDHYGEDALTVGMGAEAVRSLLEELNLEELRVQLREESQATKSQTKKKKLTKRLKIVEAFLESNNKPEWMVMEVIPVIPPELRPLVPLDGGRFATSDLNDLYRRVINRNNRLKRLMELGAPDIIIRNEKRMLQEAVDALFDNGRRGRAITGTNGRPLKSLSDMIKGKQGRFRQNLLGKRVDYSGRSVIVVGPKLKLHQCGLPKKMALELFKPFIYSELEKRGLASTIKSAKKMVEREELVVWDILEEVVREYPIMLNRAPTLHRLGIQSFEPLLVEGKAIQLHPLVCSAYNADFDGDQMAVHVPLSVEAQIECRVLMMSTNNILSPANGSPVIVPSQDIVLGLYYMTVDRSFEKGENMSFCAPWEVVAAYDAGVVALHARINVRMEDGKVVRTTVGRILVWELLPHCVPFSMVNTTLTKKNIARLVSTAYRDAGTKATVILCDRLKDVGYEYATRAGVTIAVKDLTIPSTKKGLIETAQNEVDDIERQYRDGIITRTEKYNKVVDVWTKATQDVSNEMIREISSDIVEDPRTGAKEANSSFNSIYMMSTSGARGNQDQMRQLAGMRGLMAKPSGEIIETPITSSFREGLSVLQYFTSTHGARKGLADTALKTANSGYLTRRLVDVVQDVIVSEHDCGTVDGIELTHIKEGGEIKIPLADRALGRVLLYPVYDPETRDLLFPENTLVDENVAKVLVEREVSSVMIRSALTCQSDRGICTLCYGRDLARGHIVNIGETVGIIAAQSIGEPGTQLTMRTFHIGGTASREIERSSFEAQHPGRVILSRVKAVRNRDGQYMVMGKSGQLAIVDDQGREREKYTLPNGSRLLVTEGEEIRKGQILAEWDPFNEPFVSEVDGVIRFSDIVEGKTFQEKMDEATRMTTQTIIEYRTTNFRPSISICDEHGEVKMRGNNIPATYSLPVGAIIMVKNGQDLQAGDIIARKPRETSKTKDIVGGLPRVAELFEVRKPKDMAVVSEIAGIVTYAGETKGKRKLVVTPEIGEAKEYLVPKGKHITVTDGDFVEAGDLLTEGHPELHDILRTRGEKYLARYLTDEIQEVYRFQGVAIDDKHIEVIVRQMLKKVTVLDPGGTTFLVGEQVDKGEFRVENTRAMGEGRTPATAEPLVLGITQASLTTSSFISAASFQETTKVLTEASLRGKMDYLRGLKENVIVGRLIPAGTGYREYVNTDILVPEQRERPDKFLEDLEENPLLVDIY</sequence>
<organism>
    <name type="scientific">Nitratidesulfovibrio vulgaris (strain DP4)</name>
    <name type="common">Desulfovibrio vulgaris</name>
    <dbReference type="NCBI Taxonomy" id="391774"/>
    <lineage>
        <taxon>Bacteria</taxon>
        <taxon>Pseudomonadati</taxon>
        <taxon>Thermodesulfobacteriota</taxon>
        <taxon>Desulfovibrionia</taxon>
        <taxon>Desulfovibrionales</taxon>
        <taxon>Desulfovibrionaceae</taxon>
        <taxon>Nitratidesulfovibrio</taxon>
    </lineage>
</organism>
<comment type="function">
    <text evidence="1">DNA-dependent RNA polymerase catalyzes the transcription of DNA into RNA using the four ribonucleoside triphosphates as substrates.</text>
</comment>
<comment type="catalytic activity">
    <reaction evidence="1">
        <text>RNA(n) + a ribonucleoside 5'-triphosphate = RNA(n+1) + diphosphate</text>
        <dbReference type="Rhea" id="RHEA:21248"/>
        <dbReference type="Rhea" id="RHEA-COMP:14527"/>
        <dbReference type="Rhea" id="RHEA-COMP:17342"/>
        <dbReference type="ChEBI" id="CHEBI:33019"/>
        <dbReference type="ChEBI" id="CHEBI:61557"/>
        <dbReference type="ChEBI" id="CHEBI:140395"/>
        <dbReference type="EC" id="2.7.7.6"/>
    </reaction>
</comment>
<comment type="cofactor">
    <cofactor evidence="1">
        <name>Mg(2+)</name>
        <dbReference type="ChEBI" id="CHEBI:18420"/>
    </cofactor>
    <text evidence="1">Binds 1 Mg(2+) ion per subunit.</text>
</comment>
<comment type="cofactor">
    <cofactor evidence="1">
        <name>Zn(2+)</name>
        <dbReference type="ChEBI" id="CHEBI:29105"/>
    </cofactor>
    <text evidence="1">Binds 2 Zn(2+) ions per subunit.</text>
</comment>
<comment type="subunit">
    <text evidence="1">The RNAP catalytic core consists of 2 alpha, 1 beta, 1 beta' and 1 omega subunit. When a sigma factor is associated with the core the holoenzyme is formed, which can initiate transcription.</text>
</comment>
<comment type="similarity">
    <text evidence="1">Belongs to the RNA polymerase beta' chain family.</text>
</comment>
<dbReference type="EC" id="2.7.7.6" evidence="1"/>
<dbReference type="EMBL" id="CP000527">
    <property type="protein sequence ID" value="ABM27461.1"/>
    <property type="molecule type" value="Genomic_DNA"/>
</dbReference>
<dbReference type="RefSeq" id="WP_010940189.1">
    <property type="nucleotide sequence ID" value="NC_008751.1"/>
</dbReference>
<dbReference type="SMR" id="A1VAJ5"/>
<dbReference type="KEGG" id="dvl:Dvul_0438"/>
<dbReference type="HOGENOM" id="CLU_000524_3_1_7"/>
<dbReference type="Proteomes" id="UP000009173">
    <property type="component" value="Chromosome"/>
</dbReference>
<dbReference type="GO" id="GO:0000428">
    <property type="term" value="C:DNA-directed RNA polymerase complex"/>
    <property type="evidence" value="ECO:0007669"/>
    <property type="project" value="UniProtKB-KW"/>
</dbReference>
<dbReference type="GO" id="GO:0003677">
    <property type="term" value="F:DNA binding"/>
    <property type="evidence" value="ECO:0007669"/>
    <property type="project" value="UniProtKB-UniRule"/>
</dbReference>
<dbReference type="GO" id="GO:0003899">
    <property type="term" value="F:DNA-directed RNA polymerase activity"/>
    <property type="evidence" value="ECO:0007669"/>
    <property type="project" value="UniProtKB-UniRule"/>
</dbReference>
<dbReference type="GO" id="GO:0000287">
    <property type="term" value="F:magnesium ion binding"/>
    <property type="evidence" value="ECO:0007669"/>
    <property type="project" value="UniProtKB-UniRule"/>
</dbReference>
<dbReference type="GO" id="GO:0008270">
    <property type="term" value="F:zinc ion binding"/>
    <property type="evidence" value="ECO:0007669"/>
    <property type="project" value="UniProtKB-UniRule"/>
</dbReference>
<dbReference type="GO" id="GO:0006351">
    <property type="term" value="P:DNA-templated transcription"/>
    <property type="evidence" value="ECO:0007669"/>
    <property type="project" value="UniProtKB-UniRule"/>
</dbReference>
<dbReference type="CDD" id="cd02655">
    <property type="entry name" value="RNAP_beta'_C"/>
    <property type="match status" value="1"/>
</dbReference>
<dbReference type="CDD" id="cd01609">
    <property type="entry name" value="RNAP_beta'_N"/>
    <property type="match status" value="1"/>
</dbReference>
<dbReference type="FunFam" id="1.10.132.30:FF:000003">
    <property type="entry name" value="DNA-directed RNA polymerase subunit beta"/>
    <property type="match status" value="1"/>
</dbReference>
<dbReference type="FunFam" id="1.10.40.90:FF:000001">
    <property type="entry name" value="DNA-directed RNA polymerase subunit beta"/>
    <property type="match status" value="1"/>
</dbReference>
<dbReference type="Gene3D" id="1.10.132.30">
    <property type="match status" value="1"/>
</dbReference>
<dbReference type="Gene3D" id="1.10.150.390">
    <property type="match status" value="1"/>
</dbReference>
<dbReference type="Gene3D" id="1.10.1790.20">
    <property type="match status" value="1"/>
</dbReference>
<dbReference type="Gene3D" id="1.10.40.90">
    <property type="match status" value="1"/>
</dbReference>
<dbReference type="Gene3D" id="2.40.40.20">
    <property type="match status" value="1"/>
</dbReference>
<dbReference type="Gene3D" id="2.40.50.100">
    <property type="match status" value="3"/>
</dbReference>
<dbReference type="Gene3D" id="4.10.860.120">
    <property type="entry name" value="RNA polymerase II, clamp domain"/>
    <property type="match status" value="1"/>
</dbReference>
<dbReference type="Gene3D" id="1.10.274.100">
    <property type="entry name" value="RNA polymerase Rpb1, domain 3"/>
    <property type="match status" value="2"/>
</dbReference>
<dbReference type="HAMAP" id="MF_01322">
    <property type="entry name" value="RNApol_bact_RpoC"/>
    <property type="match status" value="1"/>
</dbReference>
<dbReference type="InterPro" id="IPR045867">
    <property type="entry name" value="DNA-dir_RpoC_beta_prime"/>
</dbReference>
<dbReference type="InterPro" id="IPR012754">
    <property type="entry name" value="DNA-dir_RpoC_beta_prime_bact"/>
</dbReference>
<dbReference type="InterPro" id="IPR000722">
    <property type="entry name" value="RNA_pol_asu"/>
</dbReference>
<dbReference type="InterPro" id="IPR006592">
    <property type="entry name" value="RNA_pol_N"/>
</dbReference>
<dbReference type="InterPro" id="IPR007080">
    <property type="entry name" value="RNA_pol_Rpb1_1"/>
</dbReference>
<dbReference type="InterPro" id="IPR007066">
    <property type="entry name" value="RNA_pol_Rpb1_3"/>
</dbReference>
<dbReference type="InterPro" id="IPR042102">
    <property type="entry name" value="RNA_pol_Rpb1_3_sf"/>
</dbReference>
<dbReference type="InterPro" id="IPR007083">
    <property type="entry name" value="RNA_pol_Rpb1_4"/>
</dbReference>
<dbReference type="InterPro" id="IPR007081">
    <property type="entry name" value="RNA_pol_Rpb1_5"/>
</dbReference>
<dbReference type="InterPro" id="IPR044893">
    <property type="entry name" value="RNA_pol_Rpb1_clamp_domain"/>
</dbReference>
<dbReference type="InterPro" id="IPR038120">
    <property type="entry name" value="Rpb1_funnel_sf"/>
</dbReference>
<dbReference type="NCBIfam" id="TIGR02386">
    <property type="entry name" value="rpoC_TIGR"/>
    <property type="match status" value="1"/>
</dbReference>
<dbReference type="PANTHER" id="PTHR19376">
    <property type="entry name" value="DNA-DIRECTED RNA POLYMERASE"/>
    <property type="match status" value="1"/>
</dbReference>
<dbReference type="PANTHER" id="PTHR19376:SF54">
    <property type="entry name" value="DNA-DIRECTED RNA POLYMERASE SUBUNIT BETA"/>
    <property type="match status" value="1"/>
</dbReference>
<dbReference type="Pfam" id="PF04997">
    <property type="entry name" value="RNA_pol_Rpb1_1"/>
    <property type="match status" value="1"/>
</dbReference>
<dbReference type="Pfam" id="PF00623">
    <property type="entry name" value="RNA_pol_Rpb1_2"/>
    <property type="match status" value="2"/>
</dbReference>
<dbReference type="Pfam" id="PF04983">
    <property type="entry name" value="RNA_pol_Rpb1_3"/>
    <property type="match status" value="1"/>
</dbReference>
<dbReference type="Pfam" id="PF05000">
    <property type="entry name" value="RNA_pol_Rpb1_4"/>
    <property type="match status" value="1"/>
</dbReference>
<dbReference type="Pfam" id="PF04998">
    <property type="entry name" value="RNA_pol_Rpb1_5"/>
    <property type="match status" value="1"/>
</dbReference>
<dbReference type="SMART" id="SM00663">
    <property type="entry name" value="RPOLA_N"/>
    <property type="match status" value="1"/>
</dbReference>
<dbReference type="SUPFAM" id="SSF64484">
    <property type="entry name" value="beta and beta-prime subunits of DNA dependent RNA-polymerase"/>
    <property type="match status" value="1"/>
</dbReference>
<feature type="chain" id="PRO_0000308833" description="DNA-directed RNA polymerase subunit beta'">
    <location>
        <begin position="1"/>
        <end position="1385"/>
    </location>
</feature>
<feature type="binding site" evidence="1">
    <location>
        <position position="75"/>
    </location>
    <ligand>
        <name>Zn(2+)</name>
        <dbReference type="ChEBI" id="CHEBI:29105"/>
        <label>1</label>
    </ligand>
</feature>
<feature type="binding site" evidence="1">
    <location>
        <position position="77"/>
    </location>
    <ligand>
        <name>Zn(2+)</name>
        <dbReference type="ChEBI" id="CHEBI:29105"/>
        <label>1</label>
    </ligand>
</feature>
<feature type="binding site" evidence="1">
    <location>
        <position position="90"/>
    </location>
    <ligand>
        <name>Zn(2+)</name>
        <dbReference type="ChEBI" id="CHEBI:29105"/>
        <label>1</label>
    </ligand>
</feature>
<feature type="binding site" evidence="1">
    <location>
        <position position="93"/>
    </location>
    <ligand>
        <name>Zn(2+)</name>
        <dbReference type="ChEBI" id="CHEBI:29105"/>
        <label>1</label>
    </ligand>
</feature>
<feature type="binding site" evidence="1">
    <location>
        <position position="466"/>
    </location>
    <ligand>
        <name>Mg(2+)</name>
        <dbReference type="ChEBI" id="CHEBI:18420"/>
    </ligand>
</feature>
<feature type="binding site" evidence="1">
    <location>
        <position position="468"/>
    </location>
    <ligand>
        <name>Mg(2+)</name>
        <dbReference type="ChEBI" id="CHEBI:18420"/>
    </ligand>
</feature>
<feature type="binding site" evidence="1">
    <location>
        <position position="470"/>
    </location>
    <ligand>
        <name>Mg(2+)</name>
        <dbReference type="ChEBI" id="CHEBI:18420"/>
    </ligand>
</feature>
<feature type="binding site" evidence="1">
    <location>
        <position position="809"/>
    </location>
    <ligand>
        <name>Zn(2+)</name>
        <dbReference type="ChEBI" id="CHEBI:29105"/>
        <label>2</label>
    </ligand>
</feature>
<feature type="binding site" evidence="1">
    <location>
        <position position="883"/>
    </location>
    <ligand>
        <name>Zn(2+)</name>
        <dbReference type="ChEBI" id="CHEBI:29105"/>
        <label>2</label>
    </ligand>
</feature>
<feature type="binding site" evidence="1">
    <location>
        <position position="890"/>
    </location>
    <ligand>
        <name>Zn(2+)</name>
        <dbReference type="ChEBI" id="CHEBI:29105"/>
        <label>2</label>
    </ligand>
</feature>
<feature type="binding site" evidence="1">
    <location>
        <position position="893"/>
    </location>
    <ligand>
        <name>Zn(2+)</name>
        <dbReference type="ChEBI" id="CHEBI:29105"/>
        <label>2</label>
    </ligand>
</feature>
<gene>
    <name evidence="1" type="primary">rpoC</name>
    <name type="ordered locus">Dvul_0438</name>
</gene>
<name>RPOC_NITV4</name>
<accession>A1VAJ5</accession>
<keyword id="KW-0240">DNA-directed RNA polymerase</keyword>
<keyword id="KW-0460">Magnesium</keyword>
<keyword id="KW-0479">Metal-binding</keyword>
<keyword id="KW-0548">Nucleotidyltransferase</keyword>
<keyword id="KW-0804">Transcription</keyword>
<keyword id="KW-0808">Transferase</keyword>
<keyword id="KW-0862">Zinc</keyword>